<name>RSXB_ECO27</name>
<proteinExistence type="inferred from homology"/>
<reference key="1">
    <citation type="journal article" date="2009" name="J. Bacteriol.">
        <title>Complete genome sequence and comparative genome analysis of enteropathogenic Escherichia coli O127:H6 strain E2348/69.</title>
        <authorList>
            <person name="Iguchi A."/>
            <person name="Thomson N.R."/>
            <person name="Ogura Y."/>
            <person name="Saunders D."/>
            <person name="Ooka T."/>
            <person name="Henderson I.R."/>
            <person name="Harris D."/>
            <person name="Asadulghani M."/>
            <person name="Kurokawa K."/>
            <person name="Dean P."/>
            <person name="Kenny B."/>
            <person name="Quail M.A."/>
            <person name="Thurston S."/>
            <person name="Dougan G."/>
            <person name="Hayashi T."/>
            <person name="Parkhill J."/>
            <person name="Frankel G."/>
        </authorList>
    </citation>
    <scope>NUCLEOTIDE SEQUENCE [LARGE SCALE GENOMIC DNA]</scope>
    <source>
        <strain>E2348/69 / EPEC</strain>
    </source>
</reference>
<evidence type="ECO:0000255" key="1">
    <source>
        <dbReference type="HAMAP-Rule" id="MF_00463"/>
    </source>
</evidence>
<keyword id="KW-0004">4Fe-4S</keyword>
<keyword id="KW-0997">Cell inner membrane</keyword>
<keyword id="KW-1003">Cell membrane</keyword>
<keyword id="KW-0249">Electron transport</keyword>
<keyword id="KW-0408">Iron</keyword>
<keyword id="KW-0411">Iron-sulfur</keyword>
<keyword id="KW-0472">Membrane</keyword>
<keyword id="KW-0479">Metal-binding</keyword>
<keyword id="KW-1185">Reference proteome</keyword>
<keyword id="KW-0677">Repeat</keyword>
<keyword id="KW-1278">Translocase</keyword>
<keyword id="KW-0813">Transport</keyword>
<accession>B7URW9</accession>
<comment type="function">
    <text evidence="1">Part of a membrane-bound complex that couples electron transfer with translocation of ions across the membrane. Required to maintain the reduced state of SoxR.</text>
</comment>
<comment type="cofactor">
    <cofactor evidence="1">
        <name>[4Fe-4S] cluster</name>
        <dbReference type="ChEBI" id="CHEBI:49883"/>
    </cofactor>
    <text evidence="1">Binds 3 [4Fe-4S] clusters.</text>
</comment>
<comment type="subunit">
    <text evidence="1">The complex is composed of six subunits: RsxA, RsxB, RsxC, RsxD, RsxE and RsxG.</text>
</comment>
<comment type="subcellular location">
    <subcellularLocation>
        <location evidence="1">Cell inner membrane</location>
    </subcellularLocation>
</comment>
<comment type="similarity">
    <text evidence="1">Belongs to the 4Fe4S bacterial-type ferredoxin family. RnfB subfamily.</text>
</comment>
<organism>
    <name type="scientific">Escherichia coli O127:H6 (strain E2348/69 / EPEC)</name>
    <dbReference type="NCBI Taxonomy" id="574521"/>
    <lineage>
        <taxon>Bacteria</taxon>
        <taxon>Pseudomonadati</taxon>
        <taxon>Pseudomonadota</taxon>
        <taxon>Gammaproteobacteria</taxon>
        <taxon>Enterobacterales</taxon>
        <taxon>Enterobacteriaceae</taxon>
        <taxon>Escherichia</taxon>
    </lineage>
</organism>
<protein>
    <recommendedName>
        <fullName evidence="1">Ion-translocating oxidoreductase complex subunit B</fullName>
        <ecNumber evidence="1">7.-.-.-</ecNumber>
    </recommendedName>
    <alternativeName>
        <fullName evidence="1">Rsx electron transport complex subunit B</fullName>
    </alternativeName>
</protein>
<gene>
    <name evidence="1" type="primary">rsxB</name>
    <name type="ordered locus">E2348C_1715</name>
</gene>
<feature type="chain" id="PRO_1000194478" description="Ion-translocating oxidoreductase complex subunit B">
    <location>
        <begin position="1"/>
        <end position="192"/>
    </location>
</feature>
<feature type="domain" description="4Fe-4S" evidence="1">
    <location>
        <begin position="32"/>
        <end position="91"/>
    </location>
</feature>
<feature type="domain" description="4Fe-4S ferredoxin-type 1" evidence="1">
    <location>
        <begin position="108"/>
        <end position="137"/>
    </location>
</feature>
<feature type="domain" description="4Fe-4S ferredoxin-type 2" evidence="1">
    <location>
        <begin position="138"/>
        <end position="167"/>
    </location>
</feature>
<feature type="region of interest" description="Hydrophobic" evidence="1">
    <location>
        <begin position="1"/>
        <end position="26"/>
    </location>
</feature>
<feature type="binding site" evidence="1">
    <location>
        <position position="49"/>
    </location>
    <ligand>
        <name>[4Fe-4S] cluster</name>
        <dbReference type="ChEBI" id="CHEBI:49883"/>
        <label>1</label>
    </ligand>
</feature>
<feature type="binding site" evidence="1">
    <location>
        <position position="52"/>
    </location>
    <ligand>
        <name>[4Fe-4S] cluster</name>
        <dbReference type="ChEBI" id="CHEBI:49883"/>
        <label>1</label>
    </ligand>
</feature>
<feature type="binding site" evidence="1">
    <location>
        <position position="57"/>
    </location>
    <ligand>
        <name>[4Fe-4S] cluster</name>
        <dbReference type="ChEBI" id="CHEBI:49883"/>
        <label>1</label>
    </ligand>
</feature>
<feature type="binding site" evidence="1">
    <location>
        <position position="74"/>
    </location>
    <ligand>
        <name>[4Fe-4S] cluster</name>
        <dbReference type="ChEBI" id="CHEBI:49883"/>
        <label>1</label>
    </ligand>
</feature>
<feature type="binding site" evidence="1">
    <location>
        <position position="117"/>
    </location>
    <ligand>
        <name>[4Fe-4S] cluster</name>
        <dbReference type="ChEBI" id="CHEBI:49883"/>
        <label>2</label>
    </ligand>
</feature>
<feature type="binding site" evidence="1">
    <location>
        <position position="120"/>
    </location>
    <ligand>
        <name>[4Fe-4S] cluster</name>
        <dbReference type="ChEBI" id="CHEBI:49883"/>
        <label>2</label>
    </ligand>
</feature>
<feature type="binding site" evidence="1">
    <location>
        <position position="123"/>
    </location>
    <ligand>
        <name>[4Fe-4S] cluster</name>
        <dbReference type="ChEBI" id="CHEBI:49883"/>
        <label>2</label>
    </ligand>
</feature>
<feature type="binding site" evidence="1">
    <location>
        <position position="127"/>
    </location>
    <ligand>
        <name>[4Fe-4S] cluster</name>
        <dbReference type="ChEBI" id="CHEBI:49883"/>
        <label>3</label>
    </ligand>
</feature>
<feature type="binding site" evidence="1">
    <location>
        <position position="147"/>
    </location>
    <ligand>
        <name>[4Fe-4S] cluster</name>
        <dbReference type="ChEBI" id="CHEBI:49883"/>
        <label>3</label>
    </ligand>
</feature>
<feature type="binding site" evidence="1">
    <location>
        <position position="150"/>
    </location>
    <ligand>
        <name>[4Fe-4S] cluster</name>
        <dbReference type="ChEBI" id="CHEBI:49883"/>
        <label>3</label>
    </ligand>
</feature>
<feature type="binding site" evidence="1">
    <location>
        <position position="153"/>
    </location>
    <ligand>
        <name>[4Fe-4S] cluster</name>
        <dbReference type="ChEBI" id="CHEBI:49883"/>
        <label>3</label>
    </ligand>
</feature>
<feature type="binding site" evidence="1">
    <location>
        <position position="157"/>
    </location>
    <ligand>
        <name>[4Fe-4S] cluster</name>
        <dbReference type="ChEBI" id="CHEBI:49883"/>
        <label>2</label>
    </ligand>
</feature>
<sequence length="192" mass="20513">MNAIWIAVAAVSLLGLAFGAILGYASRRFAVEDDPVVEKIDEILPQSQCGQCGYPGCRPYAEAISCNGEKINRCAPGGEAVMLKIAELLNVEPQPLDGEAPELTPARMVAVIDENNCIGCTKCIQACPVDAIVGATRAMHTVMSDLCTGCNLCVDPCPTHCISLQPVAETPDSWKWDLNTIPVRIIPVEHHA</sequence>
<dbReference type="EC" id="7.-.-.-" evidence="1"/>
<dbReference type="EMBL" id="FM180568">
    <property type="protein sequence ID" value="CAS09263.1"/>
    <property type="molecule type" value="Genomic_DNA"/>
</dbReference>
<dbReference type="RefSeq" id="WP_000991802.1">
    <property type="nucleotide sequence ID" value="NC_011601.1"/>
</dbReference>
<dbReference type="KEGG" id="ecg:E2348C_1715"/>
<dbReference type="HOGENOM" id="CLU_063448_2_0_6"/>
<dbReference type="Proteomes" id="UP000008205">
    <property type="component" value="Chromosome"/>
</dbReference>
<dbReference type="GO" id="GO:0005886">
    <property type="term" value="C:plasma membrane"/>
    <property type="evidence" value="ECO:0007669"/>
    <property type="project" value="UniProtKB-SubCell"/>
</dbReference>
<dbReference type="GO" id="GO:0051539">
    <property type="term" value="F:4 iron, 4 sulfur cluster binding"/>
    <property type="evidence" value="ECO:0007669"/>
    <property type="project" value="UniProtKB-UniRule"/>
</dbReference>
<dbReference type="GO" id="GO:0009055">
    <property type="term" value="F:electron transfer activity"/>
    <property type="evidence" value="ECO:0007669"/>
    <property type="project" value="InterPro"/>
</dbReference>
<dbReference type="GO" id="GO:0046872">
    <property type="term" value="F:metal ion binding"/>
    <property type="evidence" value="ECO:0007669"/>
    <property type="project" value="UniProtKB-KW"/>
</dbReference>
<dbReference type="GO" id="GO:0022900">
    <property type="term" value="P:electron transport chain"/>
    <property type="evidence" value="ECO:0007669"/>
    <property type="project" value="UniProtKB-UniRule"/>
</dbReference>
<dbReference type="FunFam" id="1.10.15.40:FF:000001">
    <property type="entry name" value="Ion-translocating oxidoreductase complex subunit B"/>
    <property type="match status" value="1"/>
</dbReference>
<dbReference type="Gene3D" id="3.30.70.20">
    <property type="match status" value="1"/>
</dbReference>
<dbReference type="Gene3D" id="1.10.15.40">
    <property type="entry name" value="Electron transport complex subunit B, putative Fe-S cluster"/>
    <property type="match status" value="1"/>
</dbReference>
<dbReference type="HAMAP" id="MF_00463">
    <property type="entry name" value="RsxB_RnfB"/>
    <property type="match status" value="1"/>
</dbReference>
<dbReference type="InterPro" id="IPR007202">
    <property type="entry name" value="4Fe-4S_dom"/>
</dbReference>
<dbReference type="InterPro" id="IPR017896">
    <property type="entry name" value="4Fe4S_Fe-S-bd"/>
</dbReference>
<dbReference type="InterPro" id="IPR017900">
    <property type="entry name" value="4Fe4S_Fe_S_CS"/>
</dbReference>
<dbReference type="InterPro" id="IPR050395">
    <property type="entry name" value="4Fe4S_Ferredoxin_RnfB"/>
</dbReference>
<dbReference type="InterPro" id="IPR010207">
    <property type="entry name" value="Elect_transpt_cplx_RnfB/RsxB"/>
</dbReference>
<dbReference type="InterPro" id="IPR016463">
    <property type="entry name" value="RnfB/RsxB_Proteobac"/>
</dbReference>
<dbReference type="NCBIfam" id="NF003475">
    <property type="entry name" value="PRK05113.1"/>
    <property type="match status" value="1"/>
</dbReference>
<dbReference type="NCBIfam" id="TIGR01944">
    <property type="entry name" value="rnfB"/>
    <property type="match status" value="1"/>
</dbReference>
<dbReference type="PANTHER" id="PTHR43560">
    <property type="entry name" value="ION-TRANSLOCATING OXIDOREDUCTASE COMPLEX SUBUNIT B"/>
    <property type="match status" value="1"/>
</dbReference>
<dbReference type="PANTHER" id="PTHR43560:SF1">
    <property type="entry name" value="ION-TRANSLOCATING OXIDOREDUCTASE COMPLEX SUBUNIT B"/>
    <property type="match status" value="1"/>
</dbReference>
<dbReference type="Pfam" id="PF14697">
    <property type="entry name" value="Fer4_21"/>
    <property type="match status" value="1"/>
</dbReference>
<dbReference type="Pfam" id="PF04060">
    <property type="entry name" value="FeS"/>
    <property type="match status" value="1"/>
</dbReference>
<dbReference type="PIRSF" id="PIRSF005784">
    <property type="entry name" value="Elect_transpt_RnfB"/>
    <property type="match status" value="1"/>
</dbReference>
<dbReference type="SUPFAM" id="SSF54862">
    <property type="entry name" value="4Fe-4S ferredoxins"/>
    <property type="match status" value="1"/>
</dbReference>
<dbReference type="PROSITE" id="PS51656">
    <property type="entry name" value="4FE4S"/>
    <property type="match status" value="1"/>
</dbReference>
<dbReference type="PROSITE" id="PS00198">
    <property type="entry name" value="4FE4S_FER_1"/>
    <property type="match status" value="2"/>
</dbReference>
<dbReference type="PROSITE" id="PS51379">
    <property type="entry name" value="4FE4S_FER_2"/>
    <property type="match status" value="2"/>
</dbReference>